<feature type="chain" id="PRO_0000093504" description="Cytotoxin homolog 3" evidence="4">
    <location>
        <begin position="1"/>
        <end position="61"/>
    </location>
</feature>
<feature type="disulfide bond" evidence="2">
    <location>
        <begin position="3"/>
        <end position="22"/>
    </location>
</feature>
<feature type="disulfide bond" evidence="2">
    <location>
        <begin position="15"/>
        <end position="39"/>
    </location>
</feature>
<feature type="disulfide bond" evidence="2">
    <location>
        <begin position="43"/>
        <end position="54"/>
    </location>
</feature>
<feature type="disulfide bond" evidence="2">
    <location>
        <begin position="55"/>
        <end position="60"/>
    </location>
</feature>
<sequence>IKCHNTPLPFIYKTCPEGNNLCFKGTLKFPKKITYKRGCADACPKTSALVKYVCCNTDKCN</sequence>
<protein>
    <recommendedName>
        <fullName evidence="6">Cytotoxin homolog 3</fullName>
    </recommendedName>
    <alternativeName>
        <fullName evidence="5">Venom component 3.20</fullName>
    </alternativeName>
</protein>
<proteinExistence type="evidence at protein level"/>
<organism>
    <name type="scientific">Naja melanoleuca</name>
    <name type="common">Forest cobra</name>
    <name type="synonym">Black-lipped cobra</name>
    <dbReference type="NCBI Taxonomy" id="8643"/>
    <lineage>
        <taxon>Eukaryota</taxon>
        <taxon>Metazoa</taxon>
        <taxon>Chordata</taxon>
        <taxon>Craniata</taxon>
        <taxon>Vertebrata</taxon>
        <taxon>Euteleostomi</taxon>
        <taxon>Lepidosauria</taxon>
        <taxon>Squamata</taxon>
        <taxon>Bifurcata</taxon>
        <taxon>Unidentata</taxon>
        <taxon>Episquamata</taxon>
        <taxon>Toxicofera</taxon>
        <taxon>Serpentes</taxon>
        <taxon>Colubroidea</taxon>
        <taxon>Elapidae</taxon>
        <taxon>Elapinae</taxon>
        <taxon>Naja</taxon>
    </lineage>
</organism>
<name>3SOF3_NAJME</name>
<dbReference type="PIR" id="A01733">
    <property type="entry name" value="H3NJ3W"/>
</dbReference>
<dbReference type="SMR" id="P01473"/>
<dbReference type="GO" id="GO:0005576">
    <property type="term" value="C:extracellular region"/>
    <property type="evidence" value="ECO:0007669"/>
    <property type="project" value="UniProtKB-SubCell"/>
</dbReference>
<dbReference type="GO" id="GO:0016020">
    <property type="term" value="C:membrane"/>
    <property type="evidence" value="ECO:0007669"/>
    <property type="project" value="UniProtKB-KW"/>
</dbReference>
<dbReference type="GO" id="GO:0044218">
    <property type="term" value="C:other organism cell membrane"/>
    <property type="evidence" value="ECO:0007669"/>
    <property type="project" value="UniProtKB-KW"/>
</dbReference>
<dbReference type="GO" id="GO:0090729">
    <property type="term" value="F:toxin activity"/>
    <property type="evidence" value="ECO:0007669"/>
    <property type="project" value="UniProtKB-KW"/>
</dbReference>
<dbReference type="CDD" id="cd00206">
    <property type="entry name" value="TFP_snake_toxin"/>
    <property type="match status" value="1"/>
</dbReference>
<dbReference type="FunFam" id="2.10.60.10:FF:000024">
    <property type="entry name" value="Cytotoxin 1"/>
    <property type="match status" value="1"/>
</dbReference>
<dbReference type="Gene3D" id="2.10.60.10">
    <property type="entry name" value="CD59"/>
    <property type="match status" value="1"/>
</dbReference>
<dbReference type="InterPro" id="IPR003572">
    <property type="entry name" value="Cytotoxin_Cobra"/>
</dbReference>
<dbReference type="InterPro" id="IPR003571">
    <property type="entry name" value="Snake_3FTx"/>
</dbReference>
<dbReference type="InterPro" id="IPR045860">
    <property type="entry name" value="Snake_toxin-like_sf"/>
</dbReference>
<dbReference type="InterPro" id="IPR018354">
    <property type="entry name" value="Snake_toxin_con_site"/>
</dbReference>
<dbReference type="InterPro" id="IPR054131">
    <property type="entry name" value="Toxin_cobra-type"/>
</dbReference>
<dbReference type="Pfam" id="PF21947">
    <property type="entry name" value="Toxin_cobra-type"/>
    <property type="match status" value="1"/>
</dbReference>
<dbReference type="PRINTS" id="PR00282">
    <property type="entry name" value="CYTOTOXIN"/>
</dbReference>
<dbReference type="SUPFAM" id="SSF57302">
    <property type="entry name" value="Snake toxin-like"/>
    <property type="match status" value="1"/>
</dbReference>
<dbReference type="PROSITE" id="PS00272">
    <property type="entry name" value="SNAKE_TOXIN"/>
    <property type="match status" value="1"/>
</dbReference>
<reference key="1">
    <citation type="journal article" date="1975" name="Eur. J. Biochem.">
        <title>The primary structure of a major polypeptide component from the venom of Naja melanoleuca.</title>
        <authorList>
            <person name="Shipolini R.A."/>
            <person name="Kissonerghis M."/>
            <person name="Banks B.E.C."/>
        </authorList>
    </citation>
    <scope>PROTEIN SEQUENCE</scope>
    <scope>TOXIC DOSE</scope>
    <scope>SUBCELLULAR LOCATION</scope>
    <source>
        <tissue>Venom</tissue>
    </source>
</reference>
<comment type="function">
    <text evidence="1">Has low cytotoxic activity.</text>
</comment>
<comment type="subcellular location">
    <subcellularLocation>
        <location evidence="4">Secreted</location>
    </subcellularLocation>
    <subcellularLocation>
        <location evidence="3">Target cell membrane</location>
    </subcellularLocation>
</comment>
<comment type="tissue specificity">
    <text evidence="6">Expressed by the venom gland.</text>
</comment>
<comment type="toxic dose">
    <text evidence="4">LD(50) is 12 mg/kg by intraperitoneal injection.</text>
</comment>
<comment type="miscellaneous">
    <text evidence="6">Is classified as a P-type cytotoxin, since a proline residue stands at position 30 (Pro-31 in standard classification).</text>
</comment>
<comment type="similarity">
    <text evidence="6">Belongs to the three-finger toxin family. Short-chain subfamily. Orphan group XV sub-subfamily.</text>
</comment>
<accession>P01473</accession>
<keyword id="KW-0903">Direct protein sequencing</keyword>
<keyword id="KW-1015">Disulfide bond</keyword>
<keyword id="KW-0472">Membrane</keyword>
<keyword id="KW-0964">Secreted</keyword>
<keyword id="KW-1052">Target cell membrane</keyword>
<keyword id="KW-1053">Target membrane</keyword>
<keyword id="KW-0800">Toxin</keyword>
<evidence type="ECO:0000250" key="1">
    <source>
        <dbReference type="UniProtKB" id="P14541"/>
    </source>
</evidence>
<evidence type="ECO:0000250" key="2">
    <source>
        <dbReference type="UniProtKB" id="P60301"/>
    </source>
</evidence>
<evidence type="ECO:0000250" key="3">
    <source>
        <dbReference type="UniProtKB" id="P62375"/>
    </source>
</evidence>
<evidence type="ECO:0000269" key="4">
    <source>
    </source>
</evidence>
<evidence type="ECO:0000303" key="5">
    <source>
    </source>
</evidence>
<evidence type="ECO:0000305" key="6"/>